<comment type="similarity">
    <text evidence="3">Belongs to the universal stress protein A family.</text>
</comment>
<proteinExistence type="evidence at protein level"/>
<keyword id="KW-0067">ATP-binding</keyword>
<keyword id="KW-1017">Isopeptide bond</keyword>
<keyword id="KW-0547">Nucleotide-binding</keyword>
<keyword id="KW-1185">Reference proteome</keyword>
<keyword id="KW-0832">Ubl conjugation</keyword>
<reference key="1">
    <citation type="submission" date="2006-10" db="EMBL/GenBank/DDBJ databases">
        <authorList>
            <person name="Fleischmann R.D."/>
            <person name="Dodson R.J."/>
            <person name="Haft D.H."/>
            <person name="Merkel J.S."/>
            <person name="Nelson W.C."/>
            <person name="Fraser C.M."/>
        </authorList>
    </citation>
    <scope>NUCLEOTIDE SEQUENCE [LARGE SCALE GENOMIC DNA]</scope>
    <source>
        <strain>ATCC 700084 / mc(2)155</strain>
    </source>
</reference>
<reference key="2">
    <citation type="journal article" date="2007" name="Genome Biol.">
        <title>Interrupted coding sequences in Mycobacterium smegmatis: authentic mutations or sequencing errors?</title>
        <authorList>
            <person name="Deshayes C."/>
            <person name="Perrodou E."/>
            <person name="Gallien S."/>
            <person name="Euphrasie D."/>
            <person name="Schaeffer C."/>
            <person name="Van-Dorsselaer A."/>
            <person name="Poch O."/>
            <person name="Lecompte O."/>
            <person name="Reyrat J.-M."/>
        </authorList>
    </citation>
    <scope>NUCLEOTIDE SEQUENCE [LARGE SCALE GENOMIC DNA]</scope>
    <source>
        <strain>ATCC 700084 / mc(2)155</strain>
    </source>
</reference>
<reference key="3">
    <citation type="journal article" date="2009" name="Genome Res.">
        <title>Ortho-proteogenomics: multiple proteomes investigation through orthology and a new MS-based protocol.</title>
        <authorList>
            <person name="Gallien S."/>
            <person name="Perrodou E."/>
            <person name="Carapito C."/>
            <person name="Deshayes C."/>
            <person name="Reyrat J.-M."/>
            <person name="Van Dorsselaer A."/>
            <person name="Poch O."/>
            <person name="Schaeffer C."/>
            <person name="Lecompte O."/>
        </authorList>
    </citation>
    <scope>NUCLEOTIDE SEQUENCE [LARGE SCALE GENOMIC DNA]</scope>
    <source>
        <strain>ATCC 700084 / mc(2)155</strain>
    </source>
</reference>
<reference key="4">
    <citation type="journal article" date="2010" name="Mol. Biosyst.">
        <title>Expansion of the mycobacterial 'PUPylome'.</title>
        <authorList>
            <person name="Watrous J."/>
            <person name="Burns K."/>
            <person name="Liu W.T."/>
            <person name="Patel A."/>
            <person name="Hook V."/>
            <person name="Bafna V."/>
            <person name="Barry C.E. III"/>
            <person name="Bark S."/>
            <person name="Dorrestein P.C."/>
        </authorList>
    </citation>
    <scope>PUPYLATION AT LYS-109</scope>
    <scope>IDENTIFICATION BY MASS SPECTROMETRY</scope>
</reference>
<sequence length="294" mass="31452">MVQSATEYGILVGVDSSAESDAAVRWAAREASLHDAPITLMHVIAPVVVSWPAGPYMATVLECQEENARHAIEQAQKVVADCLGETHGLTVQTEIRKESVARTLIDASKSAQMVVVGNRGMGALGRVLLGSTSTSLLHYASGPVVVVHGDDQAAHDSRLPVLLGIDGSPASEVATSHAFDEASRRGVDLVALHVWIDVGDIPPIGPTWEEQEETGRALLAERLAGWQERYPDVKVHRRVERAQPAYWLLEEAKQAQLVVVGSHGRGGFTGMLLGSVSSRVAQSATTPVMVVRPR</sequence>
<dbReference type="EMBL" id="CP000480">
    <property type="protein sequence ID" value="ABK73928.1"/>
    <property type="molecule type" value="Genomic_DNA"/>
</dbReference>
<dbReference type="EMBL" id="CP001663">
    <property type="protein sequence ID" value="AFP40317.1"/>
    <property type="molecule type" value="Genomic_DNA"/>
</dbReference>
<dbReference type="RefSeq" id="WP_003895405.1">
    <property type="nucleotide sequence ID" value="NZ_SIJM01000005.1"/>
</dbReference>
<dbReference type="RefSeq" id="YP_888239.1">
    <property type="nucleotide sequence ID" value="NC_008596.1"/>
</dbReference>
<dbReference type="SMR" id="A0QZA1"/>
<dbReference type="STRING" id="246196.MSMEG_3950"/>
<dbReference type="PaxDb" id="246196-MSMEI_3859"/>
<dbReference type="KEGG" id="msb:LJ00_19630"/>
<dbReference type="KEGG" id="msg:MSMEI_3859"/>
<dbReference type="KEGG" id="msm:MSMEG_3950"/>
<dbReference type="PATRIC" id="fig|246196.19.peg.3890"/>
<dbReference type="eggNOG" id="COG0589">
    <property type="taxonomic scope" value="Bacteria"/>
</dbReference>
<dbReference type="OrthoDB" id="3174546at2"/>
<dbReference type="Proteomes" id="UP000000757">
    <property type="component" value="Chromosome"/>
</dbReference>
<dbReference type="Proteomes" id="UP000006158">
    <property type="component" value="Chromosome"/>
</dbReference>
<dbReference type="GO" id="GO:0005524">
    <property type="term" value="F:ATP binding"/>
    <property type="evidence" value="ECO:0007669"/>
    <property type="project" value="UniProtKB-KW"/>
</dbReference>
<dbReference type="CDD" id="cd23944">
    <property type="entry name" value="USP_Rv2623_repeat1"/>
    <property type="match status" value="1"/>
</dbReference>
<dbReference type="Gene3D" id="3.40.50.620">
    <property type="entry name" value="HUPs"/>
    <property type="match status" value="2"/>
</dbReference>
<dbReference type="InterPro" id="IPR014729">
    <property type="entry name" value="Rossmann-like_a/b/a_fold"/>
</dbReference>
<dbReference type="InterPro" id="IPR006015">
    <property type="entry name" value="Universal_stress_UspA"/>
</dbReference>
<dbReference type="InterPro" id="IPR006016">
    <property type="entry name" value="UspA"/>
</dbReference>
<dbReference type="PANTHER" id="PTHR46268">
    <property type="entry name" value="STRESS RESPONSE PROTEIN NHAX"/>
    <property type="match status" value="1"/>
</dbReference>
<dbReference type="PANTHER" id="PTHR46268:SF6">
    <property type="entry name" value="UNIVERSAL STRESS PROTEIN UP12"/>
    <property type="match status" value="1"/>
</dbReference>
<dbReference type="Pfam" id="PF00582">
    <property type="entry name" value="Usp"/>
    <property type="match status" value="2"/>
</dbReference>
<dbReference type="PRINTS" id="PR01438">
    <property type="entry name" value="UNVRSLSTRESS"/>
</dbReference>
<dbReference type="SUPFAM" id="SSF52402">
    <property type="entry name" value="Adenine nucleotide alpha hydrolases-like"/>
    <property type="match status" value="2"/>
</dbReference>
<gene>
    <name type="ordered locus">MSMEG_3950</name>
    <name type="ordered locus">MSMEI_3859</name>
</gene>
<organism>
    <name type="scientific">Mycolicibacterium smegmatis (strain ATCC 700084 / mc(2)155)</name>
    <name type="common">Mycobacterium smegmatis</name>
    <dbReference type="NCBI Taxonomy" id="246196"/>
    <lineage>
        <taxon>Bacteria</taxon>
        <taxon>Bacillati</taxon>
        <taxon>Actinomycetota</taxon>
        <taxon>Actinomycetes</taxon>
        <taxon>Mycobacteriales</taxon>
        <taxon>Mycobacteriaceae</taxon>
        <taxon>Mycolicibacterium</taxon>
    </lineage>
</organism>
<feature type="chain" id="PRO_0000396945" description="Universal stress protein MSMEG_3950/MSMEI_3859">
    <location>
        <begin position="1"/>
        <end position="294"/>
    </location>
</feature>
<feature type="binding site" evidence="1">
    <location>
        <position position="13"/>
    </location>
    <ligand>
        <name>ATP</name>
        <dbReference type="ChEBI" id="CHEBI:30616"/>
        <label>1</label>
    </ligand>
</feature>
<feature type="binding site" evidence="1">
    <location>
        <begin position="117"/>
        <end position="123"/>
    </location>
    <ligand>
        <name>ATP</name>
        <dbReference type="ChEBI" id="CHEBI:30616"/>
        <label>1</label>
    </ligand>
</feature>
<feature type="binding site" evidence="1">
    <location>
        <begin position="131"/>
        <end position="132"/>
    </location>
    <ligand>
        <name>ATP</name>
        <dbReference type="ChEBI" id="CHEBI:30616"/>
        <label>1</label>
    </ligand>
</feature>
<feature type="binding site" evidence="1">
    <location>
        <position position="164"/>
    </location>
    <ligand>
        <name>ATP</name>
        <dbReference type="ChEBI" id="CHEBI:30616"/>
        <label>2</label>
    </ligand>
</feature>
<feature type="binding site" evidence="1">
    <location>
        <position position="197"/>
    </location>
    <ligand>
        <name>ATP</name>
        <dbReference type="ChEBI" id="CHEBI:30616"/>
        <label>2</label>
    </ligand>
</feature>
<feature type="binding site" evidence="1">
    <location>
        <begin position="261"/>
        <end position="267"/>
    </location>
    <ligand>
        <name>ATP</name>
        <dbReference type="ChEBI" id="CHEBI:30616"/>
        <label>2</label>
    </ligand>
</feature>
<feature type="binding site" evidence="1">
    <location>
        <begin position="275"/>
        <end position="277"/>
    </location>
    <ligand>
        <name>ATP</name>
        <dbReference type="ChEBI" id="CHEBI:30616"/>
        <label>2</label>
    </ligand>
</feature>
<feature type="cross-link" description="Isoglutamyl lysine isopeptide (Lys-Gln) (interchain with Q-Cter in protein Pup)" evidence="2">
    <location>
        <position position="109"/>
    </location>
</feature>
<evidence type="ECO:0000250" key="1">
    <source>
        <dbReference type="UniProtKB" id="P9WFD7"/>
    </source>
</evidence>
<evidence type="ECO:0000269" key="2">
    <source>
    </source>
</evidence>
<evidence type="ECO:0000305" key="3"/>
<name>Y3950_MYCS2</name>
<protein>
    <recommendedName>
        <fullName>Universal stress protein MSMEG_3950/MSMEI_3859</fullName>
        <shortName>USP MSMEG_3950</shortName>
    </recommendedName>
</protein>
<accession>A0QZA1</accession>
<accession>I7G3Z8</accession>